<gene>
    <name evidence="1" type="primary">norR</name>
    <name type="ordered locus">Ecok1_26450</name>
    <name type="ORF">APECO1_3817</name>
</gene>
<sequence>MSFSVDVLANIAIELQRGIGHQDRFQRLITTLRQVLECDASALLRYDSRQFIPLAIDGLAKDVLGRRFALEGHPRLEAIARAGDVVRFPADSELPDPYDGLIPGQESLKVHACVGLPLFAGQNLIGALTLDGMQPDQFDVFSDEELRLIAALAAGALSNALLIEQLESQNMLPGDAAPFEAVKQTQMIGLSPGMTQLKKEIEIVAASDLNVLISGETGTGKELVAKAIHEASPRAVNPLVYLNCAALPESVAESELFGHVKGAFTGAISNRSGKFEMADNGTLFLDEIGELSLALQAKLLRVLQYGDIQRVGDDRSLRVDVRVLAATNRDLREEVLAGRFRADLFHRLSVFPLSVPPLRERGDDVILLAGYFCEQCRLRLGLSRVVLSAGARNLLQHYNFPGNVRELEHAIHRAVVLSRATRSGDEVILEAQHFAFPEVTLPPPEAAAVPVVKQNLREATEAFQRETIRQALAQNHHNWAACARMLETDVANLHRLAKRLGLKD</sequence>
<protein>
    <recommendedName>
        <fullName evidence="1">Anaerobic nitric oxide reductase transcription regulator NorR</fullName>
    </recommendedName>
</protein>
<feature type="chain" id="PRO_0000305620" description="Anaerobic nitric oxide reductase transcription regulator NorR">
    <location>
        <begin position="1"/>
        <end position="504"/>
    </location>
</feature>
<feature type="domain" description="Sigma-54 factor interaction" evidence="1">
    <location>
        <begin position="187"/>
        <end position="416"/>
    </location>
</feature>
<feature type="DNA-binding region" description="H-T-H motif" evidence="1">
    <location>
        <begin position="479"/>
        <end position="498"/>
    </location>
</feature>
<feature type="binding site" evidence="1">
    <location>
        <begin position="215"/>
        <end position="222"/>
    </location>
    <ligand>
        <name>ATP</name>
        <dbReference type="ChEBI" id="CHEBI:30616"/>
    </ligand>
</feature>
<feature type="binding site" evidence="1">
    <location>
        <begin position="278"/>
        <end position="287"/>
    </location>
    <ligand>
        <name>ATP</name>
        <dbReference type="ChEBI" id="CHEBI:30616"/>
    </ligand>
</feature>
<feature type="modified residue" description="4-aspartylphosphate" evidence="1">
    <location>
        <position position="57"/>
    </location>
</feature>
<comment type="function">
    <text evidence="1">Required for the expression of anaerobic nitric oxide (NO) reductase, acts as a transcriptional activator for at least the norVW operon. Activation also requires sigma-54.</text>
</comment>
<comment type="pathway">
    <text evidence="1">Nitrogen metabolism; nitric oxide reduction.</text>
</comment>
<accession>A1AEP9</accession>
<keyword id="KW-0067">ATP-binding</keyword>
<keyword id="KW-0238">DNA-binding</keyword>
<keyword id="KW-0547">Nucleotide-binding</keyword>
<keyword id="KW-0597">Phosphoprotein</keyword>
<keyword id="KW-1185">Reference proteome</keyword>
<keyword id="KW-0804">Transcription</keyword>
<keyword id="KW-0805">Transcription regulation</keyword>
<evidence type="ECO:0000255" key="1">
    <source>
        <dbReference type="HAMAP-Rule" id="MF_01314"/>
    </source>
</evidence>
<dbReference type="EMBL" id="CP000468">
    <property type="protein sequence ID" value="ABJ02139.1"/>
    <property type="molecule type" value="Genomic_DNA"/>
</dbReference>
<dbReference type="RefSeq" id="WP_000010727.1">
    <property type="nucleotide sequence ID" value="NZ_CADILS010000020.1"/>
</dbReference>
<dbReference type="SMR" id="A1AEP9"/>
<dbReference type="KEGG" id="ecv:APECO1_3817"/>
<dbReference type="HOGENOM" id="CLU_000445_125_0_6"/>
<dbReference type="UniPathway" id="UPA00638"/>
<dbReference type="Proteomes" id="UP000008216">
    <property type="component" value="Chromosome"/>
</dbReference>
<dbReference type="GO" id="GO:0005524">
    <property type="term" value="F:ATP binding"/>
    <property type="evidence" value="ECO:0007669"/>
    <property type="project" value="UniProtKB-UniRule"/>
</dbReference>
<dbReference type="GO" id="GO:0016887">
    <property type="term" value="F:ATP hydrolysis activity"/>
    <property type="evidence" value="ECO:0007669"/>
    <property type="project" value="InterPro"/>
</dbReference>
<dbReference type="GO" id="GO:0003677">
    <property type="term" value="F:DNA binding"/>
    <property type="evidence" value="ECO:0007669"/>
    <property type="project" value="UniProtKB-KW"/>
</dbReference>
<dbReference type="GO" id="GO:0003700">
    <property type="term" value="F:DNA-binding transcription factor activity"/>
    <property type="evidence" value="ECO:0007669"/>
    <property type="project" value="UniProtKB-UniRule"/>
</dbReference>
<dbReference type="GO" id="GO:0000160">
    <property type="term" value="P:phosphorelay signal transduction system"/>
    <property type="evidence" value="ECO:0007669"/>
    <property type="project" value="UniProtKB-UniRule"/>
</dbReference>
<dbReference type="CDD" id="cd00009">
    <property type="entry name" value="AAA"/>
    <property type="match status" value="1"/>
</dbReference>
<dbReference type="FunFam" id="1.10.10.60:FF:000188">
    <property type="entry name" value="Anaerobic nitric oxide reductase transcription regulator NorR"/>
    <property type="match status" value="1"/>
</dbReference>
<dbReference type="FunFam" id="1.10.8.60:FF:000045">
    <property type="entry name" value="Anaerobic nitric oxide reductase transcription regulator NorR"/>
    <property type="match status" value="1"/>
</dbReference>
<dbReference type="FunFam" id="3.30.450.40:FF:000021">
    <property type="entry name" value="Anaerobic nitric oxide reductase transcription regulator NorR"/>
    <property type="match status" value="1"/>
</dbReference>
<dbReference type="FunFam" id="3.40.50.300:FF:000006">
    <property type="entry name" value="DNA-binding transcriptional regulator NtrC"/>
    <property type="match status" value="1"/>
</dbReference>
<dbReference type="Gene3D" id="1.10.8.60">
    <property type="match status" value="1"/>
</dbReference>
<dbReference type="Gene3D" id="3.30.450.40">
    <property type="match status" value="1"/>
</dbReference>
<dbReference type="Gene3D" id="1.10.10.60">
    <property type="entry name" value="Homeodomain-like"/>
    <property type="match status" value="1"/>
</dbReference>
<dbReference type="Gene3D" id="3.40.50.300">
    <property type="entry name" value="P-loop containing nucleotide triphosphate hydrolases"/>
    <property type="match status" value="1"/>
</dbReference>
<dbReference type="HAMAP" id="MF_01314">
    <property type="entry name" value="NorR"/>
    <property type="match status" value="1"/>
</dbReference>
<dbReference type="InterPro" id="IPR003593">
    <property type="entry name" value="AAA+_ATPase"/>
</dbReference>
<dbReference type="InterPro" id="IPR003018">
    <property type="entry name" value="GAF"/>
</dbReference>
<dbReference type="InterPro" id="IPR029016">
    <property type="entry name" value="GAF-like_dom_sf"/>
</dbReference>
<dbReference type="InterPro" id="IPR009057">
    <property type="entry name" value="Homeodomain-like_sf"/>
</dbReference>
<dbReference type="InterPro" id="IPR023944">
    <property type="entry name" value="NorR"/>
</dbReference>
<dbReference type="InterPro" id="IPR027417">
    <property type="entry name" value="P-loop_NTPase"/>
</dbReference>
<dbReference type="InterPro" id="IPR002078">
    <property type="entry name" value="Sigma_54_int"/>
</dbReference>
<dbReference type="InterPro" id="IPR025662">
    <property type="entry name" value="Sigma_54_int_dom_ATP-bd_1"/>
</dbReference>
<dbReference type="InterPro" id="IPR025943">
    <property type="entry name" value="Sigma_54_int_dom_ATP-bd_2"/>
</dbReference>
<dbReference type="InterPro" id="IPR025944">
    <property type="entry name" value="Sigma_54_int_dom_CS"/>
</dbReference>
<dbReference type="NCBIfam" id="NF003451">
    <property type="entry name" value="PRK05022.1"/>
    <property type="match status" value="1"/>
</dbReference>
<dbReference type="PANTHER" id="PTHR32071:SF35">
    <property type="entry name" value="ANAEROBIC NITRIC OXIDE REDUCTASE TRANSCRIPTION REGULATOR NORR"/>
    <property type="match status" value="1"/>
</dbReference>
<dbReference type="PANTHER" id="PTHR32071">
    <property type="entry name" value="TRANSCRIPTIONAL REGULATORY PROTEIN"/>
    <property type="match status" value="1"/>
</dbReference>
<dbReference type="Pfam" id="PF01590">
    <property type="entry name" value="GAF"/>
    <property type="match status" value="1"/>
</dbReference>
<dbReference type="Pfam" id="PF00158">
    <property type="entry name" value="Sigma54_activat"/>
    <property type="match status" value="1"/>
</dbReference>
<dbReference type="SMART" id="SM00382">
    <property type="entry name" value="AAA"/>
    <property type="match status" value="1"/>
</dbReference>
<dbReference type="SMART" id="SM00065">
    <property type="entry name" value="GAF"/>
    <property type="match status" value="1"/>
</dbReference>
<dbReference type="SUPFAM" id="SSF55781">
    <property type="entry name" value="GAF domain-like"/>
    <property type="match status" value="1"/>
</dbReference>
<dbReference type="SUPFAM" id="SSF46689">
    <property type="entry name" value="Homeodomain-like"/>
    <property type="match status" value="1"/>
</dbReference>
<dbReference type="SUPFAM" id="SSF52540">
    <property type="entry name" value="P-loop containing nucleoside triphosphate hydrolases"/>
    <property type="match status" value="1"/>
</dbReference>
<dbReference type="PROSITE" id="PS00675">
    <property type="entry name" value="SIGMA54_INTERACT_1"/>
    <property type="match status" value="1"/>
</dbReference>
<dbReference type="PROSITE" id="PS00676">
    <property type="entry name" value="SIGMA54_INTERACT_2"/>
    <property type="match status" value="1"/>
</dbReference>
<dbReference type="PROSITE" id="PS00688">
    <property type="entry name" value="SIGMA54_INTERACT_3"/>
    <property type="match status" value="1"/>
</dbReference>
<dbReference type="PROSITE" id="PS50045">
    <property type="entry name" value="SIGMA54_INTERACT_4"/>
    <property type="match status" value="1"/>
</dbReference>
<reference key="1">
    <citation type="journal article" date="2007" name="J. Bacteriol.">
        <title>The genome sequence of avian pathogenic Escherichia coli strain O1:K1:H7 shares strong similarities with human extraintestinal pathogenic E. coli genomes.</title>
        <authorList>
            <person name="Johnson T.J."/>
            <person name="Kariyawasam S."/>
            <person name="Wannemuehler Y."/>
            <person name="Mangiamele P."/>
            <person name="Johnson S.J."/>
            <person name="Doetkott C."/>
            <person name="Skyberg J.A."/>
            <person name="Lynne A.M."/>
            <person name="Johnson J.R."/>
            <person name="Nolan L.K."/>
        </authorList>
    </citation>
    <scope>NUCLEOTIDE SEQUENCE [LARGE SCALE GENOMIC DNA]</scope>
</reference>
<name>NORR_ECOK1</name>
<proteinExistence type="inferred from homology"/>
<organism>
    <name type="scientific">Escherichia coli O1:K1 / APEC</name>
    <dbReference type="NCBI Taxonomy" id="405955"/>
    <lineage>
        <taxon>Bacteria</taxon>
        <taxon>Pseudomonadati</taxon>
        <taxon>Pseudomonadota</taxon>
        <taxon>Gammaproteobacteria</taxon>
        <taxon>Enterobacterales</taxon>
        <taxon>Enterobacteriaceae</taxon>
        <taxon>Escherichia</taxon>
    </lineage>
</organism>